<feature type="chain" id="PRO_1000140800" description="Small ribosomal subunit protein uS4">
    <location>
        <begin position="1"/>
        <end position="203"/>
    </location>
</feature>
<feature type="domain" description="S4 RNA-binding" evidence="1">
    <location>
        <begin position="93"/>
        <end position="156"/>
    </location>
</feature>
<reference key="1">
    <citation type="journal article" date="2010" name="Genome Biol.">
        <title>Structure and dynamics of the pan-genome of Streptococcus pneumoniae and closely related species.</title>
        <authorList>
            <person name="Donati C."/>
            <person name="Hiller N.L."/>
            <person name="Tettelin H."/>
            <person name="Muzzi A."/>
            <person name="Croucher N.J."/>
            <person name="Angiuoli S.V."/>
            <person name="Oggioni M."/>
            <person name="Dunning Hotopp J.C."/>
            <person name="Hu F.Z."/>
            <person name="Riley D.R."/>
            <person name="Covacci A."/>
            <person name="Mitchell T.J."/>
            <person name="Bentley S.D."/>
            <person name="Kilian M."/>
            <person name="Ehrlich G.D."/>
            <person name="Rappuoli R."/>
            <person name="Moxon E.R."/>
            <person name="Masignani V."/>
        </authorList>
    </citation>
    <scope>NUCLEOTIDE SEQUENCE [LARGE SCALE GENOMIC DNA]</scope>
    <source>
        <strain>Hungary19A-6</strain>
    </source>
</reference>
<dbReference type="EMBL" id="CP000936">
    <property type="protein sequence ID" value="ACA35767.1"/>
    <property type="molecule type" value="Genomic_DNA"/>
</dbReference>
<dbReference type="RefSeq" id="WP_000092756.1">
    <property type="nucleotide sequence ID" value="NC_010380.1"/>
</dbReference>
<dbReference type="SMR" id="B1I7Y6"/>
<dbReference type="GeneID" id="93738707"/>
<dbReference type="KEGG" id="spv:SPH_0187"/>
<dbReference type="HOGENOM" id="CLU_092403_0_1_9"/>
<dbReference type="Proteomes" id="UP000002163">
    <property type="component" value="Chromosome"/>
</dbReference>
<dbReference type="GO" id="GO:0015935">
    <property type="term" value="C:small ribosomal subunit"/>
    <property type="evidence" value="ECO:0007669"/>
    <property type="project" value="InterPro"/>
</dbReference>
<dbReference type="GO" id="GO:0019843">
    <property type="term" value="F:rRNA binding"/>
    <property type="evidence" value="ECO:0007669"/>
    <property type="project" value="UniProtKB-UniRule"/>
</dbReference>
<dbReference type="GO" id="GO:0003735">
    <property type="term" value="F:structural constituent of ribosome"/>
    <property type="evidence" value="ECO:0007669"/>
    <property type="project" value="InterPro"/>
</dbReference>
<dbReference type="GO" id="GO:0042274">
    <property type="term" value="P:ribosomal small subunit biogenesis"/>
    <property type="evidence" value="ECO:0007669"/>
    <property type="project" value="TreeGrafter"/>
</dbReference>
<dbReference type="GO" id="GO:0006412">
    <property type="term" value="P:translation"/>
    <property type="evidence" value="ECO:0007669"/>
    <property type="project" value="UniProtKB-UniRule"/>
</dbReference>
<dbReference type="CDD" id="cd00165">
    <property type="entry name" value="S4"/>
    <property type="match status" value="1"/>
</dbReference>
<dbReference type="FunFam" id="1.10.1050.10:FF:000001">
    <property type="entry name" value="30S ribosomal protein S4"/>
    <property type="match status" value="1"/>
</dbReference>
<dbReference type="FunFam" id="3.10.290.10:FF:000001">
    <property type="entry name" value="30S ribosomal protein S4"/>
    <property type="match status" value="1"/>
</dbReference>
<dbReference type="Gene3D" id="1.10.1050.10">
    <property type="entry name" value="Ribosomal Protein S4 Delta 41, Chain A, domain 1"/>
    <property type="match status" value="1"/>
</dbReference>
<dbReference type="Gene3D" id="3.10.290.10">
    <property type="entry name" value="RNA-binding S4 domain"/>
    <property type="match status" value="1"/>
</dbReference>
<dbReference type="HAMAP" id="MF_01306_B">
    <property type="entry name" value="Ribosomal_uS4_B"/>
    <property type="match status" value="1"/>
</dbReference>
<dbReference type="InterPro" id="IPR022801">
    <property type="entry name" value="Ribosomal_uS4"/>
</dbReference>
<dbReference type="InterPro" id="IPR005709">
    <property type="entry name" value="Ribosomal_uS4_bac-type"/>
</dbReference>
<dbReference type="InterPro" id="IPR018079">
    <property type="entry name" value="Ribosomal_uS4_CS"/>
</dbReference>
<dbReference type="InterPro" id="IPR001912">
    <property type="entry name" value="Ribosomal_uS4_N"/>
</dbReference>
<dbReference type="InterPro" id="IPR002942">
    <property type="entry name" value="S4_RNA-bd"/>
</dbReference>
<dbReference type="InterPro" id="IPR036986">
    <property type="entry name" value="S4_RNA-bd_sf"/>
</dbReference>
<dbReference type="NCBIfam" id="NF003717">
    <property type="entry name" value="PRK05327.1"/>
    <property type="match status" value="1"/>
</dbReference>
<dbReference type="NCBIfam" id="TIGR01017">
    <property type="entry name" value="rpsD_bact"/>
    <property type="match status" value="1"/>
</dbReference>
<dbReference type="PANTHER" id="PTHR11831">
    <property type="entry name" value="30S 40S RIBOSOMAL PROTEIN"/>
    <property type="match status" value="1"/>
</dbReference>
<dbReference type="PANTHER" id="PTHR11831:SF4">
    <property type="entry name" value="SMALL RIBOSOMAL SUBUNIT PROTEIN US4M"/>
    <property type="match status" value="1"/>
</dbReference>
<dbReference type="Pfam" id="PF00163">
    <property type="entry name" value="Ribosomal_S4"/>
    <property type="match status" value="1"/>
</dbReference>
<dbReference type="Pfam" id="PF01479">
    <property type="entry name" value="S4"/>
    <property type="match status" value="1"/>
</dbReference>
<dbReference type="SMART" id="SM01390">
    <property type="entry name" value="Ribosomal_S4"/>
    <property type="match status" value="1"/>
</dbReference>
<dbReference type="SMART" id="SM00363">
    <property type="entry name" value="S4"/>
    <property type="match status" value="1"/>
</dbReference>
<dbReference type="SUPFAM" id="SSF55174">
    <property type="entry name" value="Alpha-L RNA-binding motif"/>
    <property type="match status" value="1"/>
</dbReference>
<dbReference type="PROSITE" id="PS00632">
    <property type="entry name" value="RIBOSOMAL_S4"/>
    <property type="match status" value="1"/>
</dbReference>
<dbReference type="PROSITE" id="PS50889">
    <property type="entry name" value="S4"/>
    <property type="match status" value="1"/>
</dbReference>
<organism>
    <name type="scientific">Streptococcus pneumoniae (strain Hungary19A-6)</name>
    <dbReference type="NCBI Taxonomy" id="487214"/>
    <lineage>
        <taxon>Bacteria</taxon>
        <taxon>Bacillati</taxon>
        <taxon>Bacillota</taxon>
        <taxon>Bacilli</taxon>
        <taxon>Lactobacillales</taxon>
        <taxon>Streptococcaceae</taxon>
        <taxon>Streptococcus</taxon>
    </lineage>
</organism>
<evidence type="ECO:0000255" key="1">
    <source>
        <dbReference type="HAMAP-Rule" id="MF_01306"/>
    </source>
</evidence>
<evidence type="ECO:0000305" key="2"/>
<accession>B1I7Y6</accession>
<comment type="function">
    <text evidence="1">One of the primary rRNA binding proteins, it binds directly to 16S rRNA where it nucleates assembly of the body of the 30S subunit.</text>
</comment>
<comment type="function">
    <text evidence="1">With S5 and S12 plays an important role in translational accuracy.</text>
</comment>
<comment type="subunit">
    <text evidence="1">Part of the 30S ribosomal subunit. Contacts protein S5. The interaction surface between S4 and S5 is involved in control of translational fidelity.</text>
</comment>
<comment type="similarity">
    <text evidence="1">Belongs to the universal ribosomal protein uS4 family.</text>
</comment>
<protein>
    <recommendedName>
        <fullName evidence="1">Small ribosomal subunit protein uS4</fullName>
    </recommendedName>
    <alternativeName>
        <fullName evidence="2">30S ribosomal protein S4</fullName>
    </alternativeName>
</protein>
<name>RS4_STRPI</name>
<sequence>MSRYTGPSWKQARRLGLSLTGTGKELARRNYVPGQHGPNNRSKLSEYGLQLAEKQKLRFTYGVGEKQFRNLFVQATKIKGGILGFNFMLLLERRLDNVVYRLGLATTRRQARQFVNHGHILVDGKRVDIPSYRVTPGQVISVREKSLKVPAILEAVEATLGRPAFVSFDAEKLEGSLTRLPERDEINPEINEALVVEFYNKML</sequence>
<proteinExistence type="inferred from homology"/>
<keyword id="KW-0687">Ribonucleoprotein</keyword>
<keyword id="KW-0689">Ribosomal protein</keyword>
<keyword id="KW-0694">RNA-binding</keyword>
<keyword id="KW-0699">rRNA-binding</keyword>
<gene>
    <name evidence="1" type="primary">rpsD</name>
    <name type="ordered locus">SPH_0187</name>
</gene>